<name>CEP89_DANRE</name>
<accession>Q6P402</accession>
<gene>
    <name type="primary">cep89</name>
    <name type="synonym">ccdc123</name>
    <name type="ORF">zgc:63648</name>
</gene>
<keyword id="KW-0970">Cilium biogenesis/degradation</keyword>
<keyword id="KW-0175">Coiled coil</keyword>
<keyword id="KW-0963">Cytoplasm</keyword>
<keyword id="KW-0206">Cytoskeleton</keyword>
<keyword id="KW-0496">Mitochondrion</keyword>
<keyword id="KW-1185">Reference proteome</keyword>
<protein>
    <recommendedName>
        <fullName>Centrosomal protein of 89 kDa</fullName>
        <shortName>Cep89</shortName>
    </recommendedName>
    <alternativeName>
        <fullName>Coiled-coil domain-containing protein 123</fullName>
    </alternativeName>
</protein>
<proteinExistence type="evidence at transcript level"/>
<reference key="1">
    <citation type="submission" date="2003-12" db="EMBL/GenBank/DDBJ databases">
        <authorList>
            <consortium name="NIH - Zebrafish Gene Collection (ZGC) project"/>
        </authorList>
    </citation>
    <scope>NUCLEOTIDE SEQUENCE [LARGE SCALE MRNA]</scope>
    <source>
        <strain>SJD</strain>
    </source>
</reference>
<organism>
    <name type="scientific">Danio rerio</name>
    <name type="common">Zebrafish</name>
    <name type="synonym">Brachydanio rerio</name>
    <dbReference type="NCBI Taxonomy" id="7955"/>
    <lineage>
        <taxon>Eukaryota</taxon>
        <taxon>Metazoa</taxon>
        <taxon>Chordata</taxon>
        <taxon>Craniata</taxon>
        <taxon>Vertebrata</taxon>
        <taxon>Euteleostomi</taxon>
        <taxon>Actinopterygii</taxon>
        <taxon>Neopterygii</taxon>
        <taxon>Teleostei</taxon>
        <taxon>Ostariophysi</taxon>
        <taxon>Cypriniformes</taxon>
        <taxon>Danionidae</taxon>
        <taxon>Danioninae</taxon>
        <taxon>Danio</taxon>
    </lineage>
</organism>
<dbReference type="EMBL" id="BC063747">
    <property type="protein sequence ID" value="AAH63747.1"/>
    <property type="molecule type" value="mRNA"/>
</dbReference>
<dbReference type="RefSeq" id="NP_957172.1">
    <property type="nucleotide sequence ID" value="NM_200878.1"/>
</dbReference>
<dbReference type="SMR" id="Q6P402"/>
<dbReference type="FunCoup" id="Q6P402">
    <property type="interactions" value="2168"/>
</dbReference>
<dbReference type="STRING" id="7955.ENSDARP00000121321"/>
<dbReference type="PaxDb" id="7955-ENSDARP00000121321"/>
<dbReference type="AGR" id="ZFIN:ZDB-GENE-040426-1210"/>
<dbReference type="ZFIN" id="ZDB-GENE-040426-1210">
    <property type="gene designation" value="cep89"/>
</dbReference>
<dbReference type="eggNOG" id="ENOG502QWK8">
    <property type="taxonomic scope" value="Eukaryota"/>
</dbReference>
<dbReference type="InParanoid" id="Q6P402"/>
<dbReference type="OrthoDB" id="6622877at2759"/>
<dbReference type="PhylomeDB" id="Q6P402"/>
<dbReference type="PRO" id="PR:Q6P402"/>
<dbReference type="Proteomes" id="UP000000437">
    <property type="component" value="Chromosome 7"/>
</dbReference>
<dbReference type="GO" id="GO:0005814">
    <property type="term" value="C:centriole"/>
    <property type="evidence" value="ECO:0000250"/>
    <property type="project" value="UniProtKB"/>
</dbReference>
<dbReference type="GO" id="GO:0005813">
    <property type="term" value="C:centrosome"/>
    <property type="evidence" value="ECO:0000250"/>
    <property type="project" value="UniProtKB"/>
</dbReference>
<dbReference type="GO" id="GO:0097539">
    <property type="term" value="C:ciliary transition fiber"/>
    <property type="evidence" value="ECO:0000318"/>
    <property type="project" value="GO_Central"/>
</dbReference>
<dbReference type="GO" id="GO:0005829">
    <property type="term" value="C:cytosol"/>
    <property type="evidence" value="ECO:0007669"/>
    <property type="project" value="UniProtKB-SubCell"/>
</dbReference>
<dbReference type="GO" id="GO:0005758">
    <property type="term" value="C:mitochondrial intermembrane space"/>
    <property type="evidence" value="ECO:0007669"/>
    <property type="project" value="UniProtKB-SubCell"/>
</dbReference>
<dbReference type="GO" id="GO:0000922">
    <property type="term" value="C:spindle pole"/>
    <property type="evidence" value="ECO:0000250"/>
    <property type="project" value="UniProtKB"/>
</dbReference>
<dbReference type="GO" id="GO:0045202">
    <property type="term" value="C:synapse"/>
    <property type="evidence" value="ECO:0007669"/>
    <property type="project" value="GOC"/>
</dbReference>
<dbReference type="GO" id="GO:0007268">
    <property type="term" value="P:chemical synaptic transmission"/>
    <property type="evidence" value="ECO:0007669"/>
    <property type="project" value="InterPro"/>
</dbReference>
<dbReference type="GO" id="GO:0060271">
    <property type="term" value="P:cilium assembly"/>
    <property type="evidence" value="ECO:0000250"/>
    <property type="project" value="UniProtKB"/>
</dbReference>
<dbReference type="GO" id="GO:0007005">
    <property type="term" value="P:mitochondrion organization"/>
    <property type="evidence" value="ECO:0000318"/>
    <property type="project" value="GO_Central"/>
</dbReference>
<dbReference type="InterPro" id="IPR033545">
    <property type="entry name" value="CEP89"/>
</dbReference>
<dbReference type="PANTHER" id="PTHR36170">
    <property type="entry name" value="CENTROSOMAL PROTEIN OF 89 KDA"/>
    <property type="match status" value="1"/>
</dbReference>
<dbReference type="PANTHER" id="PTHR36170:SF1">
    <property type="entry name" value="CENTROSOMAL PROTEIN OF 89 KDA"/>
    <property type="match status" value="1"/>
</dbReference>
<feature type="chain" id="PRO_0000288811" description="Centrosomal protein of 89 kDa">
    <location>
        <begin position="1"/>
        <end position="695"/>
    </location>
</feature>
<feature type="region of interest" description="Disordered" evidence="3">
    <location>
        <begin position="24"/>
        <end position="54"/>
    </location>
</feature>
<feature type="region of interest" description="Disordered" evidence="3">
    <location>
        <begin position="66"/>
        <end position="147"/>
    </location>
</feature>
<feature type="region of interest" description="Disordered" evidence="3">
    <location>
        <begin position="167"/>
        <end position="272"/>
    </location>
</feature>
<feature type="coiled-coil region" evidence="2">
    <location>
        <begin position="276"/>
        <end position="368"/>
    </location>
</feature>
<feature type="coiled-coil region" evidence="2">
    <location>
        <begin position="406"/>
        <end position="632"/>
    </location>
</feature>
<feature type="compositionally biased region" description="Pro residues" evidence="3">
    <location>
        <begin position="34"/>
        <end position="49"/>
    </location>
</feature>
<feature type="compositionally biased region" description="Acidic residues" evidence="3">
    <location>
        <begin position="124"/>
        <end position="146"/>
    </location>
</feature>
<feature type="compositionally biased region" description="Acidic residues" evidence="3">
    <location>
        <begin position="178"/>
        <end position="189"/>
    </location>
</feature>
<feature type="compositionally biased region" description="Polar residues" evidence="3">
    <location>
        <begin position="209"/>
        <end position="226"/>
    </location>
</feature>
<feature type="compositionally biased region" description="Basic and acidic residues" evidence="3">
    <location>
        <begin position="251"/>
        <end position="271"/>
    </location>
</feature>
<comment type="function">
    <text evidence="1">Required for ciliogenesis. Also plays a role in mitochondrial metabolism where it may modulate complex IV activity (By similarity).</text>
</comment>
<comment type="subcellular location">
    <subcellularLocation>
        <location evidence="1">Cytoplasm</location>
        <location evidence="1">Cytosol</location>
    </subcellularLocation>
    <subcellularLocation>
        <location evidence="1">Cytoplasm</location>
        <location evidence="1">Cytoskeleton</location>
        <location evidence="1">Microtubule organizing center</location>
        <location evidence="1">Centrosome</location>
    </subcellularLocation>
    <subcellularLocation>
        <location evidence="1">Cytoplasm</location>
        <location evidence="1">Cytoskeleton</location>
        <location evidence="1">Spindle pole</location>
    </subcellularLocation>
    <subcellularLocation>
        <location evidence="1">Cytoplasm</location>
        <location evidence="1">Cytoskeleton</location>
        <location evidence="1">Microtubule organizing center</location>
        <location evidence="1">Centrosome</location>
        <location evidence="1">Centriole</location>
    </subcellularLocation>
    <subcellularLocation>
        <location evidence="1">Mitochondrion intermembrane space</location>
    </subcellularLocation>
    <text evidence="1">Localizes to the distal appendage region of the centriole, which anchors the mother centriole to the plasma membrane.</text>
</comment>
<sequence length="695" mass="79305">MSSKFNFSLRRKEKREFRNIAHGLIPAATIAPRPAVPRTPPPRSPNPSPERPRSALAAAILSSSLTGRTVAIPSPRQRSYSESDCSRADSQADFEPYATALYTRDRWPGSVTGRPPVPSPGRTDEDDDEDDEGNDIDELEGLEGDEDHVYQSLERQSRADDINVVYAVPLKHKKSEIDSDVDEETEDSAFDIVSPLQTEEETVVPEGAGQTQPSSLPQPRSVSRRSMASPELDDWSSPRSLKTSKRKSSRTNKESPVRVNERDRSSEDSEVLRSTLEVQHALVKELKEQNQILSQEKETLEKRCLQQSQHMKHLQQELCHTHRERGNSTGEGSELSSLRQQAQELVDENDGLKMTVHRLNVELSRYQARFRPLTKDENAQLKGLPVKGPAPPWLLDMKYLSPLLLAYEDHLNAKDKLLKSCEEELQSLRVRAEEVIQENEKLHTQVSKSSTVSNKEWRQLQEQARLVLEENQVLIEQLELQHAKAKEAHSKHAQEVCKVSKKVMLLEAEKQSLEKELEVERKEHRALKTEFQRVRLALEHSLSLAEHQTVTDKLKRQLQDHEKVKTCEVEDLQVRLSALEVERKTLLLDKTNLNTHIKHLETELQLSQQANRKAQRRVSVLKQQVEDSLEKELIAHQYLANIVTLAEKTTHERDQLMLMASTLEKDKQGVLTRIIESTVNLGKLQEKVKVFLLQS</sequence>
<evidence type="ECO:0000250" key="1"/>
<evidence type="ECO:0000255" key="2"/>
<evidence type="ECO:0000256" key="3">
    <source>
        <dbReference type="SAM" id="MobiDB-lite"/>
    </source>
</evidence>